<feature type="initiator methionine" description="Removed" evidence="4">
    <location>
        <position position="1"/>
    </location>
</feature>
<feature type="chain" id="PRO_0000169641" description="Macrodomain Ori protein">
    <location>
        <begin position="2"/>
        <end position="112"/>
    </location>
</feature>
<feature type="region of interest" description="Disordered" evidence="1">
    <location>
        <begin position="91"/>
        <end position="112"/>
    </location>
</feature>
<feature type="compositionally biased region" description="Acidic residues" evidence="1">
    <location>
        <begin position="103"/>
        <end position="112"/>
    </location>
</feature>
<feature type="modified residue" description="N6-acetyllysine" evidence="2">
    <location>
        <position position="15"/>
    </location>
</feature>
<evidence type="ECO:0000256" key="1">
    <source>
        <dbReference type="SAM" id="MobiDB-lite"/>
    </source>
</evidence>
<evidence type="ECO:0000269" key="2">
    <source>
    </source>
</evidence>
<evidence type="ECO:0000269" key="3">
    <source>
    </source>
</evidence>
<evidence type="ECO:0000269" key="4">
    <source>
    </source>
</evidence>
<evidence type="ECO:0000303" key="5">
    <source>
    </source>
</evidence>
<evidence type="ECO:0000305" key="6"/>
<gene>
    <name evidence="5" type="primary">maoP</name>
    <name type="synonym">yifE</name>
    <name type="ordered locus">b3764</name>
    <name type="ordered locus">JW3737</name>
</gene>
<name>MAOP_ECOLI</name>
<reference key="1">
    <citation type="journal article" date="1991" name="Gene">
        <title>Sequence and transcriptional activity of the Escherichia coli K-12 chromosome region between rrnC and ilvGMEDA.</title>
        <authorList>
            <person name="Coppola G."/>
            <person name="Huang F."/>
            <person name="Riley J."/>
            <person name="Cox J.L."/>
            <person name="Hantzopoulos P."/>
            <person name="Zhou L.-B."/>
            <person name="Calhoun D.H."/>
        </authorList>
    </citation>
    <scope>NUCLEOTIDE SEQUENCE [GENOMIC DNA]</scope>
    <source>
        <strain>K12</strain>
    </source>
</reference>
<reference key="2">
    <citation type="journal article" date="1992" name="Science">
        <title>Analysis of the Escherichia coli genome: DNA sequence of the region from 84.5 to 86.5 minutes.</title>
        <authorList>
            <person name="Daniels D.L."/>
            <person name="Plunkett G. III"/>
            <person name="Burland V.D."/>
            <person name="Blattner F.R."/>
        </authorList>
    </citation>
    <scope>NUCLEOTIDE SEQUENCE [LARGE SCALE GENOMIC DNA]</scope>
    <source>
        <strain>K12 / MG1655 / ATCC 47076</strain>
    </source>
</reference>
<reference key="3">
    <citation type="journal article" date="1997" name="Science">
        <title>The complete genome sequence of Escherichia coli K-12.</title>
        <authorList>
            <person name="Blattner F.R."/>
            <person name="Plunkett G. III"/>
            <person name="Bloch C.A."/>
            <person name="Perna N.T."/>
            <person name="Burland V."/>
            <person name="Riley M."/>
            <person name="Collado-Vides J."/>
            <person name="Glasner J.D."/>
            <person name="Rode C.K."/>
            <person name="Mayhew G.F."/>
            <person name="Gregor J."/>
            <person name="Davis N.W."/>
            <person name="Kirkpatrick H.A."/>
            <person name="Goeden M.A."/>
            <person name="Rose D.J."/>
            <person name="Mau B."/>
            <person name="Shao Y."/>
        </authorList>
    </citation>
    <scope>NUCLEOTIDE SEQUENCE [LARGE SCALE GENOMIC DNA]</scope>
    <scope>SEQUENCE REVISION</scope>
    <source>
        <strain>K12 / MG1655 / ATCC 47076</strain>
    </source>
</reference>
<reference key="4">
    <citation type="journal article" date="2006" name="Mol. Syst. Biol.">
        <title>Highly accurate genome sequences of Escherichia coli K-12 strains MG1655 and W3110.</title>
        <authorList>
            <person name="Hayashi K."/>
            <person name="Morooka N."/>
            <person name="Yamamoto Y."/>
            <person name="Fujita K."/>
            <person name="Isono K."/>
            <person name="Choi S."/>
            <person name="Ohtsubo E."/>
            <person name="Baba T."/>
            <person name="Wanner B.L."/>
            <person name="Mori H."/>
            <person name="Horiuchi T."/>
        </authorList>
    </citation>
    <scope>NUCLEOTIDE SEQUENCE [LARGE SCALE GENOMIC DNA]</scope>
    <source>
        <strain>K12 / W3110 / ATCC 27325 / DSM 5911</strain>
    </source>
</reference>
<reference key="5">
    <citation type="journal article" date="1997" name="Electrophoresis">
        <title>Comparing the predicted and observed properties of proteins encoded in the genome of Escherichia coli K-12.</title>
        <authorList>
            <person name="Link A.J."/>
            <person name="Robison K."/>
            <person name="Church G.M."/>
        </authorList>
    </citation>
    <scope>PROTEIN SEQUENCE OF 2-13</scope>
    <source>
        <strain>K12 / EMG2</strain>
    </source>
</reference>
<reference key="6">
    <citation type="journal article" date="1999" name="Electrophoresis">
        <title>Enrichment of low abundance proteins of Escherichia coli by hydroxyapatite chromatography.</title>
        <authorList>
            <person name="Fountoulakis M."/>
            <person name="Takacs M.-F."/>
            <person name="Berndt P."/>
            <person name="Langen H."/>
            <person name="Takacs B."/>
        </authorList>
    </citation>
    <scope>IDENTIFICATION BY MASS SPECTROMETRY</scope>
    <source>
        <strain>B / BL21</strain>
    </source>
</reference>
<reference key="7">
    <citation type="journal article" date="2009" name="Mol. Cell. Proteomics">
        <title>Lysine acetylation is a highly abundant and evolutionarily conserved modification in Escherichia coli.</title>
        <authorList>
            <person name="Zhang J."/>
            <person name="Sprung R."/>
            <person name="Pei J."/>
            <person name="Tan X."/>
            <person name="Kim S."/>
            <person name="Zhu H."/>
            <person name="Liu C.F."/>
            <person name="Grishin N.V."/>
            <person name="Zhao Y."/>
        </authorList>
    </citation>
    <scope>ACETYLATION [LARGE SCALE ANALYSIS] AT LYS-15</scope>
    <scope>IDENTIFICATION BY MASS SPECTROMETRY</scope>
    <source>
        <strain>K12 / JW1106</strain>
        <strain>K12 / MG1655 / ATCC 47076</strain>
    </source>
</reference>
<reference key="8">
    <citation type="journal article" date="2016" name="PLoS Genet.">
        <title>The MaoP/maoS Site-Specific System Organizes the Ori Region of the E. coli Chromosome into a Macrodomain.</title>
        <authorList>
            <person name="Valens M."/>
            <person name="Thiel A."/>
            <person name="Boccard F."/>
        </authorList>
    </citation>
    <scope>FUNCTION</scope>
    <scope>DISRUPTION PHENOTYPE</scope>
    <source>
        <strain>K12 / MG1655 / ATCC 47076</strain>
    </source>
</reference>
<accession>P0ADN2</accession>
<accession>P27827</accession>
<accession>Q2M875</accession>
<keyword id="KW-0007">Acetylation</keyword>
<keyword id="KW-0903">Direct protein sequencing</keyword>
<keyword id="KW-1185">Reference proteome</keyword>
<sequence length="112" mass="13134">MAESFTTTNRYFDNKHYPRGFSRHGDFTIKEAQLLERHGYAFNELDLGKREPVTEEEKLFVAVCRGEREPVTEAERVWSKYMTRIKRPKRFHTLSGGKPQVEGAEDYTDSDD</sequence>
<organism>
    <name type="scientific">Escherichia coli (strain K12)</name>
    <dbReference type="NCBI Taxonomy" id="83333"/>
    <lineage>
        <taxon>Bacteria</taxon>
        <taxon>Pseudomonadati</taxon>
        <taxon>Pseudomonadota</taxon>
        <taxon>Gammaproteobacteria</taxon>
        <taxon>Enterobacterales</taxon>
        <taxon>Enterobacteriaceae</taxon>
        <taxon>Escherichia</taxon>
    </lineage>
</organism>
<dbReference type="EMBL" id="M87049">
    <property type="protein sequence ID" value="AAA67568.1"/>
    <property type="status" value="ALT_FRAME"/>
    <property type="molecule type" value="Genomic_DNA"/>
</dbReference>
<dbReference type="EMBL" id="M37337">
    <property type="status" value="NOT_ANNOTATED_CDS"/>
    <property type="molecule type" value="Genomic_DNA"/>
</dbReference>
<dbReference type="EMBL" id="U00096">
    <property type="protein sequence ID" value="AAC77485.1"/>
    <property type="molecule type" value="Genomic_DNA"/>
</dbReference>
<dbReference type="EMBL" id="AP009048">
    <property type="protein sequence ID" value="BAE77531.1"/>
    <property type="molecule type" value="Genomic_DNA"/>
</dbReference>
<dbReference type="PIR" id="G65179">
    <property type="entry name" value="G65179"/>
</dbReference>
<dbReference type="RefSeq" id="NP_418213.1">
    <property type="nucleotide sequence ID" value="NC_000913.3"/>
</dbReference>
<dbReference type="SMR" id="P0ADN2"/>
<dbReference type="BioGRID" id="4261473">
    <property type="interactions" value="16"/>
</dbReference>
<dbReference type="BioGRID" id="852576">
    <property type="interactions" value="5"/>
</dbReference>
<dbReference type="DIP" id="DIP-48206N"/>
<dbReference type="FunCoup" id="P0ADN2">
    <property type="interactions" value="97"/>
</dbReference>
<dbReference type="IntAct" id="P0ADN2">
    <property type="interactions" value="6"/>
</dbReference>
<dbReference type="STRING" id="511145.b3764"/>
<dbReference type="iPTMnet" id="P0ADN2"/>
<dbReference type="jPOST" id="P0ADN2"/>
<dbReference type="PaxDb" id="511145-b3764"/>
<dbReference type="EnsemblBacteria" id="AAC77485">
    <property type="protein sequence ID" value="AAC77485"/>
    <property type="gene ID" value="b3764"/>
</dbReference>
<dbReference type="GeneID" id="948274"/>
<dbReference type="KEGG" id="ecj:JW3737"/>
<dbReference type="KEGG" id="eco:b3764"/>
<dbReference type="KEGG" id="ecoc:C3026_20395"/>
<dbReference type="PATRIC" id="fig|511145.12.peg.3882"/>
<dbReference type="EchoBASE" id="EB1419"/>
<dbReference type="eggNOG" id="COG3085">
    <property type="taxonomic scope" value="Bacteria"/>
</dbReference>
<dbReference type="HOGENOM" id="CLU_144599_2_2_6"/>
<dbReference type="InParanoid" id="P0ADN2"/>
<dbReference type="OMA" id="CRGIREP"/>
<dbReference type="OrthoDB" id="6400110at2"/>
<dbReference type="PhylomeDB" id="P0ADN2"/>
<dbReference type="BioCyc" id="EcoCyc:EG11450-MONOMER"/>
<dbReference type="PRO" id="PR:P0ADN2"/>
<dbReference type="Proteomes" id="UP000000625">
    <property type="component" value="Chromosome"/>
</dbReference>
<dbReference type="GO" id="GO:0005829">
    <property type="term" value="C:cytosol"/>
    <property type="evidence" value="ECO:0000314"/>
    <property type="project" value="EcoCyc"/>
</dbReference>
<dbReference type="GO" id="GO:0051276">
    <property type="term" value="P:chromosome organization"/>
    <property type="evidence" value="ECO:0000315"/>
    <property type="project" value="EcoCyc"/>
</dbReference>
<dbReference type="GO" id="GO:0007059">
    <property type="term" value="P:chromosome segregation"/>
    <property type="evidence" value="ECO:0000315"/>
    <property type="project" value="EcoCyc"/>
</dbReference>
<dbReference type="GO" id="GO:0044010">
    <property type="term" value="P:single-species biofilm formation"/>
    <property type="evidence" value="ECO:0000315"/>
    <property type="project" value="EcoCyc"/>
</dbReference>
<dbReference type="InterPro" id="IPR007335">
    <property type="entry name" value="DUF413"/>
</dbReference>
<dbReference type="NCBIfam" id="NF008251">
    <property type="entry name" value="PRK11027.1-1"/>
    <property type="match status" value="1"/>
</dbReference>
<dbReference type="NCBIfam" id="NF008252">
    <property type="entry name" value="PRK11027.1-2"/>
    <property type="match status" value="1"/>
</dbReference>
<dbReference type="NCBIfam" id="NF008253">
    <property type="entry name" value="PRK11027.1-4"/>
    <property type="match status" value="1"/>
</dbReference>
<dbReference type="Pfam" id="PF04219">
    <property type="entry name" value="DUF413"/>
    <property type="match status" value="1"/>
</dbReference>
<proteinExistence type="evidence at protein level"/>
<comment type="function">
    <text evidence="3">Involved in the organization of the Ori region of the chromosome into a macrodomain (MD) (PubMed:27627105). It constrains DNA mobility in the Ori macrodomain and limits long-distance DNA interactions with other chromosomal regions (PubMed:27627105). Is part of a system composed of two elements: MaoP, which can act both in cis and in trans, and a cis-acting target sequence called maoS (PubMed:27627105).</text>
</comment>
<comment type="disruption phenotype">
    <text evidence="3">Inactivation of the gene affects Ori macrodomain organization and Ori positioning (PubMed:27627105). It removes constraints on DNA mobility in the Ori macrodomain and allows long-range interaction between Ori and Right macrodomains (PubMed:27627105).</text>
</comment>
<comment type="miscellaneous">
    <text evidence="3">MaoP belongs to a group of proteins conserved in Enterobacteria that coevolved with the Dam DNA methylase and that includes SeqA, MukBEF and MatP, which are all involved in the control of chromosome conformation and segregation.</text>
</comment>
<comment type="similarity">
    <text evidence="6">Belongs to the MaoP family.</text>
</comment>
<comment type="sequence caution" evidence="6">
    <conflict type="frameshift">
        <sequence resource="EMBL-CDS" id="AAA67568"/>
    </conflict>
</comment>
<protein>
    <recommendedName>
        <fullName evidence="5">Macrodomain Ori protein</fullName>
    </recommendedName>
</protein>